<keyword id="KW-0472">Membrane</keyword>
<keyword id="KW-1185">Reference proteome</keyword>
<keyword id="KW-0812">Transmembrane</keyword>
<keyword id="KW-1133">Transmembrane helix</keyword>
<reference key="1">
    <citation type="journal article" date="2000" name="Nature">
        <title>Sequence and analysis of chromosome 1 of the plant Arabidopsis thaliana.</title>
        <authorList>
            <person name="Theologis A."/>
            <person name="Ecker J.R."/>
            <person name="Palm C.J."/>
            <person name="Federspiel N.A."/>
            <person name="Kaul S."/>
            <person name="White O."/>
            <person name="Alonso J."/>
            <person name="Altafi H."/>
            <person name="Araujo R."/>
            <person name="Bowman C.L."/>
            <person name="Brooks S.Y."/>
            <person name="Buehler E."/>
            <person name="Chan A."/>
            <person name="Chao Q."/>
            <person name="Chen H."/>
            <person name="Cheuk R.F."/>
            <person name="Chin C.W."/>
            <person name="Chung M.K."/>
            <person name="Conn L."/>
            <person name="Conway A.B."/>
            <person name="Conway A.R."/>
            <person name="Creasy T.H."/>
            <person name="Dewar K."/>
            <person name="Dunn P."/>
            <person name="Etgu P."/>
            <person name="Feldblyum T.V."/>
            <person name="Feng J.-D."/>
            <person name="Fong B."/>
            <person name="Fujii C.Y."/>
            <person name="Gill J.E."/>
            <person name="Goldsmith A.D."/>
            <person name="Haas B."/>
            <person name="Hansen N.F."/>
            <person name="Hughes B."/>
            <person name="Huizar L."/>
            <person name="Hunter J.L."/>
            <person name="Jenkins J."/>
            <person name="Johnson-Hopson C."/>
            <person name="Khan S."/>
            <person name="Khaykin E."/>
            <person name="Kim C.J."/>
            <person name="Koo H.L."/>
            <person name="Kremenetskaia I."/>
            <person name="Kurtz D.B."/>
            <person name="Kwan A."/>
            <person name="Lam B."/>
            <person name="Langin-Hooper S."/>
            <person name="Lee A."/>
            <person name="Lee J.M."/>
            <person name="Lenz C.A."/>
            <person name="Li J.H."/>
            <person name="Li Y.-P."/>
            <person name="Lin X."/>
            <person name="Liu S.X."/>
            <person name="Liu Z.A."/>
            <person name="Luros J.S."/>
            <person name="Maiti R."/>
            <person name="Marziali A."/>
            <person name="Militscher J."/>
            <person name="Miranda M."/>
            <person name="Nguyen M."/>
            <person name="Nierman W.C."/>
            <person name="Osborne B.I."/>
            <person name="Pai G."/>
            <person name="Peterson J."/>
            <person name="Pham P.K."/>
            <person name="Rizzo M."/>
            <person name="Rooney T."/>
            <person name="Rowley D."/>
            <person name="Sakano H."/>
            <person name="Salzberg S.L."/>
            <person name="Schwartz J.R."/>
            <person name="Shinn P."/>
            <person name="Southwick A.M."/>
            <person name="Sun H."/>
            <person name="Tallon L.J."/>
            <person name="Tambunga G."/>
            <person name="Toriumi M.J."/>
            <person name="Town C.D."/>
            <person name="Utterback T."/>
            <person name="Van Aken S."/>
            <person name="Vaysberg M."/>
            <person name="Vysotskaia V.S."/>
            <person name="Walker M."/>
            <person name="Wu D."/>
            <person name="Yu G."/>
            <person name="Fraser C.M."/>
            <person name="Venter J.C."/>
            <person name="Davis R.W."/>
        </authorList>
    </citation>
    <scope>NUCLEOTIDE SEQUENCE [LARGE SCALE GENOMIC DNA]</scope>
    <source>
        <strain>cv. Columbia</strain>
    </source>
</reference>
<reference key="2">
    <citation type="journal article" date="2017" name="Plant J.">
        <title>Araport11: a complete reannotation of the Arabidopsis thaliana reference genome.</title>
        <authorList>
            <person name="Cheng C.Y."/>
            <person name="Krishnakumar V."/>
            <person name="Chan A.P."/>
            <person name="Thibaud-Nissen F."/>
            <person name="Schobel S."/>
            <person name="Town C.D."/>
        </authorList>
    </citation>
    <scope>GENOME REANNOTATION</scope>
    <source>
        <strain>cv. Columbia</strain>
    </source>
</reference>
<reference key="3">
    <citation type="journal article" date="2000" name="Trends Plant Sci.">
        <title>F-box proteins in Arabidopsis.</title>
        <authorList>
            <person name="Xiao W."/>
            <person name="Jang J.-C."/>
        </authorList>
    </citation>
    <scope>GENE FAMILY</scope>
    <scope>NOMENCLATURE</scope>
</reference>
<accession>P0C2C9</accession>
<accession>Q9FYI0</accession>
<gene>
    <name type="primary">FBX12</name>
    <name type="ordered locus">At1g30935</name>
    <name type="ORF">F17F8.20</name>
</gene>
<feature type="chain" id="PRO_0000273546" description="F-box only protein 12">
    <location>
        <begin position="1"/>
        <end position="404"/>
    </location>
</feature>
<feature type="transmembrane region" description="Helical" evidence="1">
    <location>
        <begin position="383"/>
        <end position="403"/>
    </location>
</feature>
<feature type="domain" description="F-box" evidence="2">
    <location>
        <begin position="1"/>
        <end position="44"/>
    </location>
</feature>
<name>FBX12_ARATH</name>
<comment type="subcellular location">
    <subcellularLocation>
        <location evidence="3">Membrane</location>
        <topology evidence="3">Single-pass membrane protein</topology>
    </subcellularLocation>
</comment>
<comment type="sequence caution" evidence="3">
    <conflict type="erroneous gene model prediction">
        <sequence resource="EMBL-CDS" id="AAF98190"/>
    </conflict>
    <text>The predicted gene At1g30930 has been split into 2 genes: At1g30930 and At1g30935.</text>
</comment>
<sequence length="404" mass="46505">MKNSIPIDLIYEILSRLPAKSVARCRCVSKRWRSILRHQVFTELFLTRSNARPRLLIGVQQDGEWSFLSTPQPQNRHESSSLVVAAADFHTKFSSGKSRHQCTYASGGSYSYLGFDPIDKEFKVLFMDTCDFIASKDEDHYILTLGTGELKWRKIQCPFTHEPFWERICINGVLYYSAYYSDSNGRSHLIACFDVRSEKFNFIATKHRYDQLINYKGKLCGINLEYARHVGGFPVKLSMWVLEDVEKPEWSKHVYSLWTESEVVKVNRNLSVSGMTATGDIVLSMEDATNPFYVFNFNPDRNTLQVQSVEIQGLGANRDHIACHAFVDYVEDFSVSDAVLQLKSSPLQQQGQDTSHDLSKSVKNKQLDNYEFLANKLNHSVSLAILFCLFFLLFNYLIRLCWVR</sequence>
<evidence type="ECO:0000255" key="1"/>
<evidence type="ECO:0000255" key="2">
    <source>
        <dbReference type="PROSITE-ProRule" id="PRU00080"/>
    </source>
</evidence>
<evidence type="ECO:0000305" key="3"/>
<dbReference type="EMBL" id="AC000107">
    <property type="protein sequence ID" value="AAF98190.1"/>
    <property type="status" value="ALT_SEQ"/>
    <property type="molecule type" value="Genomic_DNA"/>
</dbReference>
<dbReference type="EMBL" id="CP002684">
    <property type="status" value="NOT_ANNOTATED_CDS"/>
    <property type="molecule type" value="Genomic_DNA"/>
</dbReference>
<dbReference type="FunCoup" id="P0C2C9">
    <property type="interactions" value="21"/>
</dbReference>
<dbReference type="Araport" id="AT1G30935"/>
<dbReference type="TAIR" id="AT1G30935"/>
<dbReference type="InParanoid" id="P0C2C9"/>
<dbReference type="PRO" id="PR:P0C2C9"/>
<dbReference type="Proteomes" id="UP000006548">
    <property type="component" value="Chromosome 1"/>
</dbReference>
<dbReference type="ExpressionAtlas" id="P0C2C9">
    <property type="expression patterns" value="baseline"/>
</dbReference>
<dbReference type="GO" id="GO:0016020">
    <property type="term" value="C:membrane"/>
    <property type="evidence" value="ECO:0007669"/>
    <property type="project" value="UniProtKB-SubCell"/>
</dbReference>
<dbReference type="CDD" id="cd22157">
    <property type="entry name" value="F-box_AtFBW1-like"/>
    <property type="match status" value="1"/>
</dbReference>
<dbReference type="Gene3D" id="1.20.1280.50">
    <property type="match status" value="1"/>
</dbReference>
<dbReference type="InterPro" id="IPR013187">
    <property type="entry name" value="F-box-assoc_dom_typ3"/>
</dbReference>
<dbReference type="InterPro" id="IPR017451">
    <property type="entry name" value="F-box-assoc_interact_dom"/>
</dbReference>
<dbReference type="InterPro" id="IPR036047">
    <property type="entry name" value="F-box-like_dom_sf"/>
</dbReference>
<dbReference type="InterPro" id="IPR001810">
    <property type="entry name" value="F-box_dom"/>
</dbReference>
<dbReference type="NCBIfam" id="TIGR01640">
    <property type="entry name" value="F_box_assoc_1"/>
    <property type="match status" value="1"/>
</dbReference>
<dbReference type="PANTHER" id="PTHR31111">
    <property type="entry name" value="BNAA05G37150D PROTEIN-RELATED"/>
    <property type="match status" value="1"/>
</dbReference>
<dbReference type="PANTHER" id="PTHR31111:SF137">
    <property type="entry name" value="F-BOX ONLY PROTEIN 12"/>
    <property type="match status" value="1"/>
</dbReference>
<dbReference type="Pfam" id="PF00646">
    <property type="entry name" value="F-box"/>
    <property type="match status" value="1"/>
</dbReference>
<dbReference type="Pfam" id="PF08268">
    <property type="entry name" value="FBA_3"/>
    <property type="match status" value="1"/>
</dbReference>
<dbReference type="SMART" id="SM00256">
    <property type="entry name" value="FBOX"/>
    <property type="match status" value="1"/>
</dbReference>
<dbReference type="SUPFAM" id="SSF81383">
    <property type="entry name" value="F-box domain"/>
    <property type="match status" value="1"/>
</dbReference>
<dbReference type="PROSITE" id="PS50181">
    <property type="entry name" value="FBOX"/>
    <property type="match status" value="1"/>
</dbReference>
<protein>
    <recommendedName>
        <fullName>F-box only protein 12</fullName>
    </recommendedName>
</protein>
<proteinExistence type="evidence at transcript level"/>
<organism>
    <name type="scientific">Arabidopsis thaliana</name>
    <name type="common">Mouse-ear cress</name>
    <dbReference type="NCBI Taxonomy" id="3702"/>
    <lineage>
        <taxon>Eukaryota</taxon>
        <taxon>Viridiplantae</taxon>
        <taxon>Streptophyta</taxon>
        <taxon>Embryophyta</taxon>
        <taxon>Tracheophyta</taxon>
        <taxon>Spermatophyta</taxon>
        <taxon>Magnoliopsida</taxon>
        <taxon>eudicotyledons</taxon>
        <taxon>Gunneridae</taxon>
        <taxon>Pentapetalae</taxon>
        <taxon>rosids</taxon>
        <taxon>malvids</taxon>
        <taxon>Brassicales</taxon>
        <taxon>Brassicaceae</taxon>
        <taxon>Camelineae</taxon>
        <taxon>Arabidopsis</taxon>
    </lineage>
</organism>